<feature type="chain" id="PRO_0000113639" description="Serine hydroxymethyltransferase 3">
    <location>
        <begin position="1"/>
        <end position="417"/>
    </location>
</feature>
<feature type="binding site" evidence="1">
    <location>
        <position position="121"/>
    </location>
    <ligand>
        <name>(6S)-5,6,7,8-tetrahydrofolate</name>
        <dbReference type="ChEBI" id="CHEBI:57453"/>
    </ligand>
</feature>
<feature type="binding site" evidence="1">
    <location>
        <begin position="125"/>
        <end position="127"/>
    </location>
    <ligand>
        <name>(6S)-5,6,7,8-tetrahydrofolate</name>
        <dbReference type="ChEBI" id="CHEBI:57453"/>
    </ligand>
</feature>
<feature type="binding site" evidence="1">
    <location>
        <begin position="354"/>
        <end position="356"/>
    </location>
    <ligand>
        <name>(6S)-5,6,7,8-tetrahydrofolate</name>
        <dbReference type="ChEBI" id="CHEBI:57453"/>
    </ligand>
</feature>
<feature type="site" description="Plays an important role in substrate specificity" evidence="1">
    <location>
        <position position="228"/>
    </location>
</feature>
<feature type="modified residue" description="N6-(pyridoxal phosphate)lysine" evidence="1">
    <location>
        <position position="229"/>
    </location>
</feature>
<organism>
    <name type="scientific">Pseudomonas aeruginosa (strain ATCC 15692 / DSM 22644 / CIP 104116 / JCM 14847 / LMG 12228 / 1C / PRS 101 / PAO1)</name>
    <dbReference type="NCBI Taxonomy" id="208964"/>
    <lineage>
        <taxon>Bacteria</taxon>
        <taxon>Pseudomonadati</taxon>
        <taxon>Pseudomonadota</taxon>
        <taxon>Gammaproteobacteria</taxon>
        <taxon>Pseudomonadales</taxon>
        <taxon>Pseudomonadaceae</taxon>
        <taxon>Pseudomonas</taxon>
    </lineage>
</organism>
<accession>Q9HVI7</accession>
<protein>
    <recommendedName>
        <fullName evidence="1">Serine hydroxymethyltransferase 3</fullName>
        <shortName evidence="1">SHMT 3</shortName>
        <shortName evidence="1">Serine methylase 3</shortName>
        <ecNumber evidence="1">2.1.2.1</ecNumber>
    </recommendedName>
</protein>
<reference key="1">
    <citation type="journal article" date="2000" name="Nature">
        <title>Complete genome sequence of Pseudomonas aeruginosa PAO1, an opportunistic pathogen.</title>
        <authorList>
            <person name="Stover C.K."/>
            <person name="Pham X.-Q.T."/>
            <person name="Erwin A.L."/>
            <person name="Mizoguchi S.D."/>
            <person name="Warrener P."/>
            <person name="Hickey M.J."/>
            <person name="Brinkman F.S.L."/>
            <person name="Hufnagle W.O."/>
            <person name="Kowalik D.J."/>
            <person name="Lagrou M."/>
            <person name="Garber R.L."/>
            <person name="Goltry L."/>
            <person name="Tolentino E."/>
            <person name="Westbrock-Wadman S."/>
            <person name="Yuan Y."/>
            <person name="Brody L.L."/>
            <person name="Coulter S.N."/>
            <person name="Folger K.R."/>
            <person name="Kas A."/>
            <person name="Larbig K."/>
            <person name="Lim R.M."/>
            <person name="Smith K.A."/>
            <person name="Spencer D.H."/>
            <person name="Wong G.K.-S."/>
            <person name="Wu Z."/>
            <person name="Paulsen I.T."/>
            <person name="Reizer J."/>
            <person name="Saier M.H. Jr."/>
            <person name="Hancock R.E.W."/>
            <person name="Lory S."/>
            <person name="Olson M.V."/>
        </authorList>
    </citation>
    <scope>NUCLEOTIDE SEQUENCE [LARGE SCALE GENOMIC DNA]</scope>
    <source>
        <strain>ATCC 15692 / DSM 22644 / CIP 104116 / JCM 14847 / LMG 12228 / 1C / PRS 101 / PAO1</strain>
    </source>
</reference>
<sequence length="417" mass="45157">MFSRDLTLARYDAELFAAMEQEAQRQEEHIELIASENYTSPAVMEAQGSVLTNKYAEGYPHKRYYGGCEYVDIVEQLAIDRAKQLFGADYANVQPHAGSQANAAVYLALLSAGDTILGMSLAHGGHLTHGASVSSSGKLYNAVQYGIDANGLIDYDEVERLAVEHKPKMIVAGFSAYSQVLDFARFRAIADKVGAYLFVDMAHVAGLVAAGVYPNPVPFADVVTTTTHKTLRGPRGGLILARANEEIEKKLNSAVFPSAQGGPLEHVIAAKAVCFKEALQPEFKTYQQQVLKNAQSMAQVFLDRGFDVVSGGTQNHLFLLSLIKQDITGKDADAALGRAFITVNKNSVPNDPRSPFVTSGLRIGTPAVTTRGFKEAECRELAGWICDILENMGDESVVDGVREKVKAICAKFPVYGN</sequence>
<dbReference type="EC" id="2.1.2.1" evidence="1"/>
<dbReference type="EMBL" id="AE004091">
    <property type="protein sequence ID" value="AAG07990.1"/>
    <property type="molecule type" value="Genomic_DNA"/>
</dbReference>
<dbReference type="PIR" id="D83070">
    <property type="entry name" value="D83070"/>
</dbReference>
<dbReference type="RefSeq" id="NP_253292.1">
    <property type="nucleotide sequence ID" value="NC_002516.2"/>
</dbReference>
<dbReference type="SMR" id="Q9HVI7"/>
<dbReference type="FunCoup" id="Q9HVI7">
    <property type="interactions" value="740"/>
</dbReference>
<dbReference type="STRING" id="208964.PA4602"/>
<dbReference type="PaxDb" id="208964-PA4602"/>
<dbReference type="GeneID" id="881085"/>
<dbReference type="KEGG" id="pae:PA4602"/>
<dbReference type="PATRIC" id="fig|208964.12.peg.4817"/>
<dbReference type="PseudoCAP" id="PA4602"/>
<dbReference type="HOGENOM" id="CLU_022477_2_1_6"/>
<dbReference type="InParanoid" id="Q9HVI7"/>
<dbReference type="OrthoDB" id="9803846at2"/>
<dbReference type="PhylomeDB" id="Q9HVI7"/>
<dbReference type="BioCyc" id="PAER208964:G1FZ6-4696-MONOMER"/>
<dbReference type="UniPathway" id="UPA00193"/>
<dbReference type="UniPathway" id="UPA00288">
    <property type="reaction ID" value="UER01023"/>
</dbReference>
<dbReference type="Proteomes" id="UP000002438">
    <property type="component" value="Chromosome"/>
</dbReference>
<dbReference type="GO" id="GO:0005737">
    <property type="term" value="C:cytoplasm"/>
    <property type="evidence" value="ECO:0000318"/>
    <property type="project" value="GO_Central"/>
</dbReference>
<dbReference type="GO" id="GO:0005829">
    <property type="term" value="C:cytosol"/>
    <property type="evidence" value="ECO:0000318"/>
    <property type="project" value="GO_Central"/>
</dbReference>
<dbReference type="GO" id="GO:0004372">
    <property type="term" value="F:glycine hydroxymethyltransferase activity"/>
    <property type="evidence" value="ECO:0000318"/>
    <property type="project" value="GO_Central"/>
</dbReference>
<dbReference type="GO" id="GO:0030170">
    <property type="term" value="F:pyridoxal phosphate binding"/>
    <property type="evidence" value="ECO:0000318"/>
    <property type="project" value="GO_Central"/>
</dbReference>
<dbReference type="GO" id="GO:0019264">
    <property type="term" value="P:glycine biosynthetic process from serine"/>
    <property type="evidence" value="ECO:0000318"/>
    <property type="project" value="GO_Central"/>
</dbReference>
<dbReference type="GO" id="GO:0035999">
    <property type="term" value="P:tetrahydrofolate interconversion"/>
    <property type="evidence" value="ECO:0007669"/>
    <property type="project" value="UniProtKB-UniRule"/>
</dbReference>
<dbReference type="GO" id="GO:0046653">
    <property type="term" value="P:tetrahydrofolate metabolic process"/>
    <property type="evidence" value="ECO:0000318"/>
    <property type="project" value="GO_Central"/>
</dbReference>
<dbReference type="CDD" id="cd00378">
    <property type="entry name" value="SHMT"/>
    <property type="match status" value="1"/>
</dbReference>
<dbReference type="FunFam" id="3.40.640.10:FF:000001">
    <property type="entry name" value="Serine hydroxymethyltransferase"/>
    <property type="match status" value="1"/>
</dbReference>
<dbReference type="FunFam" id="3.90.1150.10:FF:000003">
    <property type="entry name" value="Serine hydroxymethyltransferase"/>
    <property type="match status" value="1"/>
</dbReference>
<dbReference type="Gene3D" id="3.90.1150.10">
    <property type="entry name" value="Aspartate Aminotransferase, domain 1"/>
    <property type="match status" value="1"/>
</dbReference>
<dbReference type="Gene3D" id="3.40.640.10">
    <property type="entry name" value="Type I PLP-dependent aspartate aminotransferase-like (Major domain)"/>
    <property type="match status" value="1"/>
</dbReference>
<dbReference type="HAMAP" id="MF_00051">
    <property type="entry name" value="SHMT"/>
    <property type="match status" value="1"/>
</dbReference>
<dbReference type="InterPro" id="IPR015424">
    <property type="entry name" value="PyrdxlP-dep_Trfase"/>
</dbReference>
<dbReference type="InterPro" id="IPR015421">
    <property type="entry name" value="PyrdxlP-dep_Trfase_major"/>
</dbReference>
<dbReference type="InterPro" id="IPR015422">
    <property type="entry name" value="PyrdxlP-dep_Trfase_small"/>
</dbReference>
<dbReference type="InterPro" id="IPR001085">
    <property type="entry name" value="Ser_HO-MeTrfase"/>
</dbReference>
<dbReference type="InterPro" id="IPR049943">
    <property type="entry name" value="Ser_HO-MeTrfase-like"/>
</dbReference>
<dbReference type="InterPro" id="IPR019798">
    <property type="entry name" value="Ser_HO-MeTrfase_PLP_BS"/>
</dbReference>
<dbReference type="InterPro" id="IPR039429">
    <property type="entry name" value="SHMT-like_dom"/>
</dbReference>
<dbReference type="NCBIfam" id="NF000586">
    <property type="entry name" value="PRK00011.1"/>
    <property type="match status" value="1"/>
</dbReference>
<dbReference type="PANTHER" id="PTHR11680">
    <property type="entry name" value="SERINE HYDROXYMETHYLTRANSFERASE"/>
    <property type="match status" value="1"/>
</dbReference>
<dbReference type="PANTHER" id="PTHR11680:SF50">
    <property type="entry name" value="SERINE HYDROXYMETHYLTRANSFERASE"/>
    <property type="match status" value="1"/>
</dbReference>
<dbReference type="Pfam" id="PF00464">
    <property type="entry name" value="SHMT"/>
    <property type="match status" value="1"/>
</dbReference>
<dbReference type="PIRSF" id="PIRSF000412">
    <property type="entry name" value="SHMT"/>
    <property type="match status" value="1"/>
</dbReference>
<dbReference type="SUPFAM" id="SSF53383">
    <property type="entry name" value="PLP-dependent transferases"/>
    <property type="match status" value="1"/>
</dbReference>
<dbReference type="PROSITE" id="PS00096">
    <property type="entry name" value="SHMT"/>
    <property type="match status" value="1"/>
</dbReference>
<keyword id="KW-0028">Amino-acid biosynthesis</keyword>
<keyword id="KW-0963">Cytoplasm</keyword>
<keyword id="KW-0554">One-carbon metabolism</keyword>
<keyword id="KW-0663">Pyridoxal phosphate</keyword>
<keyword id="KW-1185">Reference proteome</keyword>
<keyword id="KW-0808">Transferase</keyword>
<gene>
    <name evidence="1" type="primary">glyA3</name>
    <name type="ordered locus">PA4602</name>
</gene>
<name>GLYA3_PSEAE</name>
<evidence type="ECO:0000255" key="1">
    <source>
        <dbReference type="HAMAP-Rule" id="MF_00051"/>
    </source>
</evidence>
<proteinExistence type="inferred from homology"/>
<comment type="function">
    <text evidence="1">Catalyzes the reversible interconversion of serine and glycine with tetrahydrofolate (THF) serving as the one-carbon carrier. This reaction serves as the major source of one-carbon groups required for the biosynthesis of purines, thymidylate, methionine, and other important biomolecules. Also exhibits THF-independent aldolase activity toward beta-hydroxyamino acids, producing glycine and aldehydes, via a retro-aldol mechanism.</text>
</comment>
<comment type="catalytic activity">
    <reaction evidence="1">
        <text>(6R)-5,10-methylene-5,6,7,8-tetrahydrofolate + glycine + H2O = (6S)-5,6,7,8-tetrahydrofolate + L-serine</text>
        <dbReference type="Rhea" id="RHEA:15481"/>
        <dbReference type="ChEBI" id="CHEBI:15377"/>
        <dbReference type="ChEBI" id="CHEBI:15636"/>
        <dbReference type="ChEBI" id="CHEBI:33384"/>
        <dbReference type="ChEBI" id="CHEBI:57305"/>
        <dbReference type="ChEBI" id="CHEBI:57453"/>
        <dbReference type="EC" id="2.1.2.1"/>
    </reaction>
</comment>
<comment type="cofactor">
    <cofactor evidence="1">
        <name>pyridoxal 5'-phosphate</name>
        <dbReference type="ChEBI" id="CHEBI:597326"/>
    </cofactor>
</comment>
<comment type="pathway">
    <text evidence="1">One-carbon metabolism; tetrahydrofolate interconversion.</text>
</comment>
<comment type="pathway">
    <text evidence="1">Amino-acid biosynthesis; glycine biosynthesis; glycine from L-serine: step 1/1.</text>
</comment>
<comment type="subunit">
    <text evidence="1">Homodimer.</text>
</comment>
<comment type="subcellular location">
    <subcellularLocation>
        <location evidence="1">Cytoplasm</location>
    </subcellularLocation>
</comment>
<comment type="similarity">
    <text evidence="1">Belongs to the SHMT family.</text>
</comment>